<keyword id="KW-0997">Cell inner membrane</keyword>
<keyword id="KW-1003">Cell membrane</keyword>
<keyword id="KW-0472">Membrane</keyword>
<keyword id="KW-1185">Reference proteome</keyword>
<keyword id="KW-1277">Toxin-antitoxin system</keyword>
<keyword id="KW-0812">Transmembrane</keyword>
<keyword id="KW-1133">Transmembrane helix</keyword>
<organism>
    <name type="scientific">Escherichia coli O157:H7</name>
    <dbReference type="NCBI Taxonomy" id="83334"/>
    <lineage>
        <taxon>Bacteria</taxon>
        <taxon>Pseudomonadati</taxon>
        <taxon>Pseudomonadota</taxon>
        <taxon>Gammaproteobacteria</taxon>
        <taxon>Enterobacterales</taxon>
        <taxon>Enterobacteriaceae</taxon>
        <taxon>Escherichia</taxon>
    </lineage>
</organism>
<sequence length="50" mass="5592">MLTKYALVAVIVLCLTVLGFTLLVGDSLCEFTVKERNIEFKAVLAYEPKK</sequence>
<protein>
    <recommendedName>
        <fullName>Protein HokE</fullName>
    </recommendedName>
</protein>
<comment type="function">
    <text evidence="1">Toxic component of a type I toxin-antitoxin (TA) system (By similarity). When overexpressed kills cells within minutes; causes collapse of the transmembrane potential and arrest of respiration (By similarity). Its toxic effect is probably neutralized by an antisense antitoxin Sok RNA (By similarity).</text>
</comment>
<comment type="subcellular location">
    <subcellularLocation>
        <location evidence="1">Cell inner membrane</location>
        <topology evidence="3">Single-pass membrane protein</topology>
    </subcellularLocation>
</comment>
<comment type="similarity">
    <text evidence="3">Belongs to the Hok/Gef family.</text>
</comment>
<comment type="sequence caution" evidence="3">
    <conflict type="erroneous initiation">
        <sequence resource="EMBL-CDS" id="AAG54916"/>
    </conflict>
    <text>Extended N-terminus.</text>
</comment>
<comment type="sequence caution" evidence="3">
    <conflict type="erroneous initiation">
        <sequence resource="EMBL-CDS" id="BAB34044"/>
    </conflict>
    <text>Extended N-terminus.</text>
</comment>
<name>HOKE_ECO57</name>
<evidence type="ECO:0000250" key="1">
    <source>
        <dbReference type="UniProtKB" id="P0ACG4"/>
    </source>
</evidence>
<evidence type="ECO:0000255" key="2"/>
<evidence type="ECO:0000305" key="3"/>
<proteinExistence type="inferred from homology"/>
<feature type="chain" id="PRO_0000199037" description="Protein HokE">
    <location>
        <begin position="1"/>
        <end position="50"/>
    </location>
</feature>
<feature type="transmembrane region" description="Helical" evidence="2">
    <location>
        <begin position="5"/>
        <end position="25"/>
    </location>
</feature>
<dbReference type="EMBL" id="AE005174">
    <property type="protein sequence ID" value="AAG54916.1"/>
    <property type="status" value="ALT_INIT"/>
    <property type="molecule type" value="Genomic_DNA"/>
</dbReference>
<dbReference type="EMBL" id="BA000007">
    <property type="protein sequence ID" value="BAB34044.1"/>
    <property type="status" value="ALT_INIT"/>
    <property type="molecule type" value="Genomic_DNA"/>
</dbReference>
<dbReference type="PIR" id="E90706">
    <property type="entry name" value="E90706"/>
</dbReference>
<dbReference type="PIR" id="H85556">
    <property type="entry name" value="H85556"/>
</dbReference>
<dbReference type="RefSeq" id="NP_308648.1">
    <property type="nucleotide sequence ID" value="NC_002695.1"/>
</dbReference>
<dbReference type="RefSeq" id="WP_000956465.1">
    <property type="nucleotide sequence ID" value="NZ_VOAI01000012.1"/>
</dbReference>
<dbReference type="SMR" id="Q8XBW9"/>
<dbReference type="STRING" id="155864.Z0722"/>
<dbReference type="GeneID" id="93776905"/>
<dbReference type="KEGG" id="ece:Z0722"/>
<dbReference type="KEGG" id="ecs:ECs_0621"/>
<dbReference type="PATRIC" id="fig|386585.9.peg.729"/>
<dbReference type="eggNOG" id="ENOG50336J3">
    <property type="taxonomic scope" value="Bacteria"/>
</dbReference>
<dbReference type="HOGENOM" id="CLU_177638_3_0_6"/>
<dbReference type="Proteomes" id="UP000000558">
    <property type="component" value="Chromosome"/>
</dbReference>
<dbReference type="Proteomes" id="UP000002519">
    <property type="component" value="Chromosome"/>
</dbReference>
<dbReference type="GO" id="GO:0005886">
    <property type="term" value="C:plasma membrane"/>
    <property type="evidence" value="ECO:0007669"/>
    <property type="project" value="UniProtKB-SubCell"/>
</dbReference>
<dbReference type="InterPro" id="IPR000021">
    <property type="entry name" value="Hok/gef_toxin"/>
</dbReference>
<dbReference type="InterPro" id="IPR018084">
    <property type="entry name" value="Hok/gef_toxin_CS"/>
</dbReference>
<dbReference type="Pfam" id="PF01848">
    <property type="entry name" value="HOK_GEF"/>
    <property type="match status" value="1"/>
</dbReference>
<dbReference type="PRINTS" id="PR00281">
    <property type="entry name" value="HOKGEFTOXIC"/>
</dbReference>
<dbReference type="PROSITE" id="PS00556">
    <property type="entry name" value="HOK_GEF"/>
    <property type="match status" value="1"/>
</dbReference>
<accession>Q8XBW9</accession>
<accession>Q7AGS2</accession>
<reference key="1">
    <citation type="journal article" date="2001" name="Nature">
        <title>Genome sequence of enterohaemorrhagic Escherichia coli O157:H7.</title>
        <authorList>
            <person name="Perna N.T."/>
            <person name="Plunkett G. III"/>
            <person name="Burland V."/>
            <person name="Mau B."/>
            <person name="Glasner J.D."/>
            <person name="Rose D.J."/>
            <person name="Mayhew G.F."/>
            <person name="Evans P.S."/>
            <person name="Gregor J."/>
            <person name="Kirkpatrick H.A."/>
            <person name="Posfai G."/>
            <person name="Hackett J."/>
            <person name="Klink S."/>
            <person name="Boutin A."/>
            <person name="Shao Y."/>
            <person name="Miller L."/>
            <person name="Grotbeck E.J."/>
            <person name="Davis N.W."/>
            <person name="Lim A."/>
            <person name="Dimalanta E.T."/>
            <person name="Potamousis K."/>
            <person name="Apodaca J."/>
            <person name="Anantharaman T.S."/>
            <person name="Lin J."/>
            <person name="Yen G."/>
            <person name="Schwartz D.C."/>
            <person name="Welch R.A."/>
            <person name="Blattner F.R."/>
        </authorList>
    </citation>
    <scope>NUCLEOTIDE SEQUENCE [LARGE SCALE GENOMIC DNA]</scope>
    <source>
        <strain>O157:H7 / EDL933 / ATCC 700927 / EHEC</strain>
    </source>
</reference>
<reference key="2">
    <citation type="journal article" date="2001" name="DNA Res.">
        <title>Complete genome sequence of enterohemorrhagic Escherichia coli O157:H7 and genomic comparison with a laboratory strain K-12.</title>
        <authorList>
            <person name="Hayashi T."/>
            <person name="Makino K."/>
            <person name="Ohnishi M."/>
            <person name="Kurokawa K."/>
            <person name="Ishii K."/>
            <person name="Yokoyama K."/>
            <person name="Han C.-G."/>
            <person name="Ohtsubo E."/>
            <person name="Nakayama K."/>
            <person name="Murata T."/>
            <person name="Tanaka M."/>
            <person name="Tobe T."/>
            <person name="Iida T."/>
            <person name="Takami H."/>
            <person name="Honda T."/>
            <person name="Sasakawa C."/>
            <person name="Ogasawara N."/>
            <person name="Yasunaga T."/>
            <person name="Kuhara S."/>
            <person name="Shiba T."/>
            <person name="Hattori M."/>
            <person name="Shinagawa H."/>
        </authorList>
    </citation>
    <scope>NUCLEOTIDE SEQUENCE [LARGE SCALE GENOMIC DNA]</scope>
    <source>
        <strain>O157:H7 / Sakai / RIMD 0509952 / EHEC</strain>
    </source>
</reference>
<gene>
    <name type="primary">hokE</name>
    <name type="ordered locus">Z0722</name>
    <name type="ordered locus">ECs0621</name>
</gene>